<dbReference type="EMBL" id="CP000087">
    <property type="protein sequence ID" value="ABE04115.1"/>
    <property type="molecule type" value="Genomic_DNA"/>
</dbReference>
<dbReference type="RefSeq" id="WP_011476730.1">
    <property type="nucleotide sequence ID" value="NC_007940.1"/>
</dbReference>
<dbReference type="SMR" id="Q1RKJ9"/>
<dbReference type="KEGG" id="rbe:RBE_0034"/>
<dbReference type="eggNOG" id="COG1195">
    <property type="taxonomic scope" value="Bacteria"/>
</dbReference>
<dbReference type="HOGENOM" id="CLU_040267_2_0_5"/>
<dbReference type="OrthoDB" id="9803889at2"/>
<dbReference type="Proteomes" id="UP000001951">
    <property type="component" value="Chromosome"/>
</dbReference>
<dbReference type="GO" id="GO:0005737">
    <property type="term" value="C:cytoplasm"/>
    <property type="evidence" value="ECO:0007669"/>
    <property type="project" value="UniProtKB-SubCell"/>
</dbReference>
<dbReference type="GO" id="GO:0005524">
    <property type="term" value="F:ATP binding"/>
    <property type="evidence" value="ECO:0007669"/>
    <property type="project" value="UniProtKB-UniRule"/>
</dbReference>
<dbReference type="GO" id="GO:0003697">
    <property type="term" value="F:single-stranded DNA binding"/>
    <property type="evidence" value="ECO:0007669"/>
    <property type="project" value="UniProtKB-UniRule"/>
</dbReference>
<dbReference type="GO" id="GO:0006260">
    <property type="term" value="P:DNA replication"/>
    <property type="evidence" value="ECO:0007669"/>
    <property type="project" value="UniProtKB-UniRule"/>
</dbReference>
<dbReference type="GO" id="GO:0000731">
    <property type="term" value="P:DNA synthesis involved in DNA repair"/>
    <property type="evidence" value="ECO:0007669"/>
    <property type="project" value="TreeGrafter"/>
</dbReference>
<dbReference type="GO" id="GO:0006302">
    <property type="term" value="P:double-strand break repair"/>
    <property type="evidence" value="ECO:0007669"/>
    <property type="project" value="TreeGrafter"/>
</dbReference>
<dbReference type="GO" id="GO:0009432">
    <property type="term" value="P:SOS response"/>
    <property type="evidence" value="ECO:0007669"/>
    <property type="project" value="UniProtKB-UniRule"/>
</dbReference>
<dbReference type="Gene3D" id="3.40.50.300">
    <property type="entry name" value="P-loop containing nucleotide triphosphate hydrolases"/>
    <property type="match status" value="1"/>
</dbReference>
<dbReference type="Gene3D" id="1.20.1050.90">
    <property type="entry name" value="RecF/RecN/SMC, N-terminal domain"/>
    <property type="match status" value="1"/>
</dbReference>
<dbReference type="HAMAP" id="MF_00365">
    <property type="entry name" value="RecF"/>
    <property type="match status" value="1"/>
</dbReference>
<dbReference type="InterPro" id="IPR001238">
    <property type="entry name" value="DNA-binding_RecF"/>
</dbReference>
<dbReference type="InterPro" id="IPR018078">
    <property type="entry name" value="DNA-binding_RecF_CS"/>
</dbReference>
<dbReference type="InterPro" id="IPR027417">
    <property type="entry name" value="P-loop_NTPase"/>
</dbReference>
<dbReference type="InterPro" id="IPR003395">
    <property type="entry name" value="RecF/RecN/SMC_N"/>
</dbReference>
<dbReference type="InterPro" id="IPR042174">
    <property type="entry name" value="RecF_2"/>
</dbReference>
<dbReference type="NCBIfam" id="TIGR00611">
    <property type="entry name" value="recf"/>
    <property type="match status" value="1"/>
</dbReference>
<dbReference type="PANTHER" id="PTHR32182">
    <property type="entry name" value="DNA REPLICATION AND REPAIR PROTEIN RECF"/>
    <property type="match status" value="1"/>
</dbReference>
<dbReference type="PANTHER" id="PTHR32182:SF0">
    <property type="entry name" value="DNA REPLICATION AND REPAIR PROTEIN RECF"/>
    <property type="match status" value="1"/>
</dbReference>
<dbReference type="Pfam" id="PF02463">
    <property type="entry name" value="SMC_N"/>
    <property type="match status" value="1"/>
</dbReference>
<dbReference type="SUPFAM" id="SSF52540">
    <property type="entry name" value="P-loop containing nucleoside triphosphate hydrolases"/>
    <property type="match status" value="1"/>
</dbReference>
<dbReference type="PROSITE" id="PS00618">
    <property type="entry name" value="RECF_2"/>
    <property type="match status" value="1"/>
</dbReference>
<feature type="chain" id="PRO_0000286658" description="DNA replication and repair protein RecF">
    <location>
        <begin position="1"/>
        <end position="360"/>
    </location>
</feature>
<feature type="binding site" evidence="2">
    <location>
        <begin position="33"/>
        <end position="40"/>
    </location>
    <ligand>
        <name>ATP</name>
        <dbReference type="ChEBI" id="CHEBI:30616"/>
    </ligand>
</feature>
<protein>
    <recommendedName>
        <fullName>DNA replication and repair protein RecF</fullName>
    </recommendedName>
</protein>
<organism>
    <name type="scientific">Rickettsia bellii (strain RML369-C)</name>
    <dbReference type="NCBI Taxonomy" id="336407"/>
    <lineage>
        <taxon>Bacteria</taxon>
        <taxon>Pseudomonadati</taxon>
        <taxon>Pseudomonadota</taxon>
        <taxon>Alphaproteobacteria</taxon>
        <taxon>Rickettsiales</taxon>
        <taxon>Rickettsiaceae</taxon>
        <taxon>Rickettsieae</taxon>
        <taxon>Rickettsia</taxon>
        <taxon>belli group</taxon>
    </lineage>
</organism>
<reference key="1">
    <citation type="journal article" date="2006" name="PLoS Genet.">
        <title>Genome sequence of Rickettsia bellii illuminates the role of amoebae in gene exchanges between intracellular pathogens.</title>
        <authorList>
            <person name="Ogata H."/>
            <person name="La Scola B."/>
            <person name="Audic S."/>
            <person name="Renesto P."/>
            <person name="Blanc G."/>
            <person name="Robert C."/>
            <person name="Fournier P.-E."/>
            <person name="Claverie J.-M."/>
            <person name="Raoult D."/>
        </authorList>
    </citation>
    <scope>NUCLEOTIDE SEQUENCE [LARGE SCALE GENOMIC DNA]</scope>
    <source>
        <strain>RML369-C</strain>
    </source>
</reference>
<gene>
    <name type="primary">recF</name>
    <name type="ordered locus">RBE_0034</name>
</gene>
<name>RECF_RICBR</name>
<keyword id="KW-0067">ATP-binding</keyword>
<keyword id="KW-0963">Cytoplasm</keyword>
<keyword id="KW-0227">DNA damage</keyword>
<keyword id="KW-0234">DNA repair</keyword>
<keyword id="KW-0235">DNA replication</keyword>
<keyword id="KW-0238">DNA-binding</keyword>
<keyword id="KW-0547">Nucleotide-binding</keyword>
<keyword id="KW-0742">SOS response</keyword>
<evidence type="ECO:0000250" key="1"/>
<evidence type="ECO:0000255" key="2"/>
<evidence type="ECO:0000305" key="3"/>
<comment type="function">
    <text evidence="1">The RecF protein is involved in DNA metabolism; it is required for DNA replication and normal SOS inducibility. RecF binds preferentially to single-stranded, linear DNA. It also seems to bind ATP (By similarity).</text>
</comment>
<comment type="subcellular location">
    <subcellularLocation>
        <location evidence="1">Cytoplasm</location>
    </subcellularLocation>
</comment>
<comment type="similarity">
    <text evidence="3">Belongs to the RecF family.</text>
</comment>
<proteinExistence type="inferred from homology"/>
<sequence length="360" mass="41579">MKNIFLHSLIVENYRNFKNLELKTDNIPITIIGENGSGKTNILEAISLFYPGRGLRSARLADICRESEDHCSVRALLQSKLGLAEFSTQIKRISNRRTTEYNNSKIANNELSKFTSMVWLTPQMEGIFTSGTSDRRKFFDRIVYNFDPKHAELVSKYEHYMQERNKILAEDMWDNNWLKTIEEKMADTSIYIANNRLKTLEFMQQAIDDLENEFPKAELSIDGMVEQKILNGEEDVVGFIAAELHKTRDKDKLLGRTSFGVHKSDFLVKHKHKNILAKFCSTGEQKAILIAIILAEMNYAIKLTKTAPILLLDEVFVHLDDRRRNYLTEFFISINLQLWVTATDLKGIEEFGNKSQLIKL</sequence>
<accession>Q1RKJ9</accession>